<accession>B3EQ98</accession>
<comment type="function">
    <text evidence="1">Key component of the proton channel; it plays a direct role in the translocation of protons across the membrane.</text>
</comment>
<comment type="subunit">
    <text evidence="1">F-type ATPases have 2 components, CF(1) - the catalytic core - and CF(0) - the membrane proton channel. CF(1) has five subunits: alpha(3), beta(3), gamma(1), delta(1), epsilon(1). CF(0) has four main subunits: a, b, b' and c.</text>
</comment>
<comment type="subcellular location">
    <subcellularLocation>
        <location evidence="1">Cell inner membrane</location>
        <topology evidence="1">Multi-pass membrane protein</topology>
    </subcellularLocation>
</comment>
<comment type="similarity">
    <text evidence="1">Belongs to the ATPase A chain family.</text>
</comment>
<feature type="chain" id="PRO_5000375326" description="ATP synthase subunit a">
    <location>
        <begin position="1"/>
        <end position="338"/>
    </location>
</feature>
<feature type="transmembrane region" description="Helical" evidence="1">
    <location>
        <begin position="15"/>
        <end position="35"/>
    </location>
</feature>
<feature type="transmembrane region" description="Helical" evidence="1">
    <location>
        <begin position="109"/>
        <end position="129"/>
    </location>
</feature>
<feature type="transmembrane region" description="Helical" evidence="1">
    <location>
        <begin position="174"/>
        <end position="194"/>
    </location>
</feature>
<feature type="transmembrane region" description="Helical" evidence="1">
    <location>
        <begin position="199"/>
        <end position="219"/>
    </location>
</feature>
<feature type="transmembrane region" description="Helical" evidence="1">
    <location>
        <begin position="238"/>
        <end position="258"/>
    </location>
</feature>
<feature type="transmembrane region" description="Helical" evidence="1">
    <location>
        <begin position="262"/>
        <end position="282"/>
    </location>
</feature>
<feature type="transmembrane region" description="Helical" evidence="1">
    <location>
        <begin position="287"/>
        <end position="307"/>
    </location>
</feature>
<feature type="transmembrane region" description="Helical" evidence="1">
    <location>
        <begin position="308"/>
        <end position="328"/>
    </location>
</feature>
<feature type="region of interest" description="Disordered" evidence="2">
    <location>
        <begin position="45"/>
        <end position="66"/>
    </location>
</feature>
<feature type="compositionally biased region" description="Basic and acidic residues" evidence="2">
    <location>
        <begin position="49"/>
        <end position="65"/>
    </location>
</feature>
<dbReference type="EMBL" id="CP001101">
    <property type="protein sequence ID" value="ACE05396.1"/>
    <property type="molecule type" value="Genomic_DNA"/>
</dbReference>
<dbReference type="SMR" id="B3EQ98"/>
<dbReference type="STRING" id="331678.Cphamn1_2502"/>
<dbReference type="KEGG" id="cpb:Cphamn1_2502"/>
<dbReference type="eggNOG" id="COG0356">
    <property type="taxonomic scope" value="Bacteria"/>
</dbReference>
<dbReference type="HOGENOM" id="CLU_041018_0_0_10"/>
<dbReference type="OrthoDB" id="9809130at2"/>
<dbReference type="GO" id="GO:0005886">
    <property type="term" value="C:plasma membrane"/>
    <property type="evidence" value="ECO:0007669"/>
    <property type="project" value="UniProtKB-SubCell"/>
</dbReference>
<dbReference type="GO" id="GO:0045259">
    <property type="term" value="C:proton-transporting ATP synthase complex"/>
    <property type="evidence" value="ECO:0007669"/>
    <property type="project" value="UniProtKB-KW"/>
</dbReference>
<dbReference type="GO" id="GO:0046933">
    <property type="term" value="F:proton-transporting ATP synthase activity, rotational mechanism"/>
    <property type="evidence" value="ECO:0007669"/>
    <property type="project" value="UniProtKB-UniRule"/>
</dbReference>
<dbReference type="CDD" id="cd00310">
    <property type="entry name" value="ATP-synt_Fo_a_6"/>
    <property type="match status" value="1"/>
</dbReference>
<dbReference type="Gene3D" id="1.20.120.220">
    <property type="entry name" value="ATP synthase, F0 complex, subunit A"/>
    <property type="match status" value="1"/>
</dbReference>
<dbReference type="HAMAP" id="MF_01393">
    <property type="entry name" value="ATP_synth_a_bact"/>
    <property type="match status" value="1"/>
</dbReference>
<dbReference type="InterPro" id="IPR000568">
    <property type="entry name" value="ATP_synth_F0_asu"/>
</dbReference>
<dbReference type="InterPro" id="IPR023011">
    <property type="entry name" value="ATP_synth_F0_asu_AS"/>
</dbReference>
<dbReference type="InterPro" id="IPR045083">
    <property type="entry name" value="ATP_synth_F0_asu_bact/mt"/>
</dbReference>
<dbReference type="InterPro" id="IPR035908">
    <property type="entry name" value="F0_ATP_A_sf"/>
</dbReference>
<dbReference type="NCBIfam" id="TIGR01131">
    <property type="entry name" value="ATP_synt_6_or_A"/>
    <property type="match status" value="1"/>
</dbReference>
<dbReference type="NCBIfam" id="NF009953">
    <property type="entry name" value="PRK13419.1"/>
    <property type="match status" value="1"/>
</dbReference>
<dbReference type="PANTHER" id="PTHR11410">
    <property type="entry name" value="ATP SYNTHASE SUBUNIT A"/>
    <property type="match status" value="1"/>
</dbReference>
<dbReference type="PANTHER" id="PTHR11410:SF0">
    <property type="entry name" value="ATP SYNTHASE SUBUNIT A"/>
    <property type="match status" value="1"/>
</dbReference>
<dbReference type="Pfam" id="PF00119">
    <property type="entry name" value="ATP-synt_A"/>
    <property type="match status" value="1"/>
</dbReference>
<dbReference type="PRINTS" id="PR00123">
    <property type="entry name" value="ATPASEA"/>
</dbReference>
<dbReference type="SUPFAM" id="SSF81336">
    <property type="entry name" value="F1F0 ATP synthase subunit A"/>
    <property type="match status" value="1"/>
</dbReference>
<dbReference type="PROSITE" id="PS00449">
    <property type="entry name" value="ATPASE_A"/>
    <property type="match status" value="1"/>
</dbReference>
<sequence length="338" mass="36595">MKRFNAIRIGELVRIAVLVMPLLLGFGAPIYAAAEVHGEAGAHEAAAVHTDEAHGEAGEHAEGGHGEGGAGDVIMHHILDSNAMEFEPFGKFPLPKIVIGGFDLSITRHVVFMWLAALILLLVFGYVGNKYKSIKSNEAPGGVANAMEALVEFIRLDVAKSNIGEGYEKHMPYLLTVFVFILVLNLLGLIPYGASATGNINVTLTLSVFTFFITQVSAIKSNGIKGYLAHLTAGTHWALWIIMIPIEVIGLFTKPFALTIRLFANMTAGHIIILSLIFISFILKSYIVAIFVSVPFSIFIYLLEIFVSFLQAFIFTMLSALFIGLGSAHEGHEAEGAH</sequence>
<keyword id="KW-0066">ATP synthesis</keyword>
<keyword id="KW-0997">Cell inner membrane</keyword>
<keyword id="KW-1003">Cell membrane</keyword>
<keyword id="KW-0138">CF(0)</keyword>
<keyword id="KW-0375">Hydrogen ion transport</keyword>
<keyword id="KW-0406">Ion transport</keyword>
<keyword id="KW-0472">Membrane</keyword>
<keyword id="KW-0812">Transmembrane</keyword>
<keyword id="KW-1133">Transmembrane helix</keyword>
<keyword id="KW-0813">Transport</keyword>
<protein>
    <recommendedName>
        <fullName evidence="1">ATP synthase subunit a</fullName>
    </recommendedName>
    <alternativeName>
        <fullName evidence="1">ATP synthase F0 sector subunit a</fullName>
    </alternativeName>
    <alternativeName>
        <fullName evidence="1">F-ATPase subunit 6</fullName>
    </alternativeName>
</protein>
<organism>
    <name type="scientific">Chlorobium phaeobacteroides (strain BS1)</name>
    <dbReference type="NCBI Taxonomy" id="331678"/>
    <lineage>
        <taxon>Bacteria</taxon>
        <taxon>Pseudomonadati</taxon>
        <taxon>Chlorobiota</taxon>
        <taxon>Chlorobiia</taxon>
        <taxon>Chlorobiales</taxon>
        <taxon>Chlorobiaceae</taxon>
        <taxon>Chlorobium/Pelodictyon group</taxon>
        <taxon>Chlorobium</taxon>
    </lineage>
</organism>
<evidence type="ECO:0000255" key="1">
    <source>
        <dbReference type="HAMAP-Rule" id="MF_01393"/>
    </source>
</evidence>
<evidence type="ECO:0000256" key="2">
    <source>
        <dbReference type="SAM" id="MobiDB-lite"/>
    </source>
</evidence>
<proteinExistence type="inferred from homology"/>
<name>ATP6_CHLPB</name>
<reference key="1">
    <citation type="submission" date="2008-06" db="EMBL/GenBank/DDBJ databases">
        <title>Complete sequence of Chlorobium phaeobacteroides BS1.</title>
        <authorList>
            <consortium name="US DOE Joint Genome Institute"/>
            <person name="Lucas S."/>
            <person name="Copeland A."/>
            <person name="Lapidus A."/>
            <person name="Glavina del Rio T."/>
            <person name="Dalin E."/>
            <person name="Tice H."/>
            <person name="Bruce D."/>
            <person name="Goodwin L."/>
            <person name="Pitluck S."/>
            <person name="Schmutz J."/>
            <person name="Larimer F."/>
            <person name="Land M."/>
            <person name="Hauser L."/>
            <person name="Kyrpides N."/>
            <person name="Ovchinnikova G."/>
            <person name="Li T."/>
            <person name="Liu Z."/>
            <person name="Zhao F."/>
            <person name="Overmann J."/>
            <person name="Bryant D.A."/>
            <person name="Richardson P."/>
        </authorList>
    </citation>
    <scope>NUCLEOTIDE SEQUENCE [LARGE SCALE GENOMIC DNA]</scope>
    <source>
        <strain>BS1</strain>
    </source>
</reference>
<gene>
    <name evidence="1" type="primary">atpB</name>
    <name type="ordered locus">Cphamn1_2502</name>
</gene>